<organism>
    <name type="scientific">Mycolicibacterium vanbaalenii (strain DSM 7251 / JCM 13017 / BCRC 16820 / KCTC 9966 / NRRL B-24157 / PYR-1)</name>
    <name type="common">Mycobacterium vanbaalenii</name>
    <dbReference type="NCBI Taxonomy" id="350058"/>
    <lineage>
        <taxon>Bacteria</taxon>
        <taxon>Bacillati</taxon>
        <taxon>Actinomycetota</taxon>
        <taxon>Actinomycetes</taxon>
        <taxon>Mycobacteriales</taxon>
        <taxon>Mycobacteriaceae</taxon>
        <taxon>Mycolicibacterium</taxon>
    </lineage>
</organism>
<feature type="chain" id="PRO_1000022238" description="Potassium-transporting ATPase potassium-binding subunit">
    <location>
        <begin position="1"/>
        <end position="556"/>
    </location>
</feature>
<feature type="transmembrane region" description="Helical" evidence="1">
    <location>
        <begin position="5"/>
        <end position="25"/>
    </location>
</feature>
<feature type="transmembrane region" description="Helical" evidence="1">
    <location>
        <begin position="65"/>
        <end position="85"/>
    </location>
</feature>
<feature type="transmembrane region" description="Helical" evidence="1">
    <location>
        <begin position="133"/>
        <end position="153"/>
    </location>
</feature>
<feature type="transmembrane region" description="Helical" evidence="1">
    <location>
        <begin position="176"/>
        <end position="196"/>
    </location>
</feature>
<feature type="transmembrane region" description="Helical" evidence="1">
    <location>
        <begin position="249"/>
        <end position="269"/>
    </location>
</feature>
<feature type="transmembrane region" description="Helical" evidence="1">
    <location>
        <begin position="283"/>
        <end position="303"/>
    </location>
</feature>
<feature type="transmembrane region" description="Helical" evidence="1">
    <location>
        <begin position="377"/>
        <end position="397"/>
    </location>
</feature>
<feature type="transmembrane region" description="Helical" evidence="1">
    <location>
        <begin position="415"/>
        <end position="435"/>
    </location>
</feature>
<feature type="transmembrane region" description="Helical" evidence="1">
    <location>
        <begin position="483"/>
        <end position="503"/>
    </location>
</feature>
<feature type="transmembrane region" description="Helical" evidence="1">
    <location>
        <begin position="526"/>
        <end position="546"/>
    </location>
</feature>
<accession>A1TED2</accession>
<keyword id="KW-1003">Cell membrane</keyword>
<keyword id="KW-0406">Ion transport</keyword>
<keyword id="KW-0472">Membrane</keyword>
<keyword id="KW-0630">Potassium</keyword>
<keyword id="KW-0633">Potassium transport</keyword>
<keyword id="KW-0812">Transmembrane</keyword>
<keyword id="KW-1133">Transmembrane helix</keyword>
<keyword id="KW-0813">Transport</keyword>
<name>KDPA_MYCVP</name>
<comment type="function">
    <text evidence="1">Part of the high-affinity ATP-driven potassium transport (or Kdp) system, which catalyzes the hydrolysis of ATP coupled with the electrogenic transport of potassium into the cytoplasm. This subunit binds the extracellular potassium ions and delivers the ions to the membrane domain of KdpB through an intramembrane tunnel.</text>
</comment>
<comment type="subunit">
    <text evidence="1">The system is composed of three essential subunits: KdpA, KdpB and KdpC.</text>
</comment>
<comment type="subcellular location">
    <subcellularLocation>
        <location evidence="1">Cell membrane</location>
        <topology evidence="1">Multi-pass membrane protein</topology>
    </subcellularLocation>
</comment>
<comment type="similarity">
    <text evidence="1">Belongs to the KdpA family.</text>
</comment>
<sequence>MSTGLAGILFLASLVIALVAVHVPLGDYMYRVYNTAKDSRAENVVYRLIGADPKAEQTWGAYARSVLAFSAVSLLFLFILQLVQGRLPSALTDPGTPMTPALAWNTAVSFVTNTNWQAYSGESTHGHLVQMAGLAVQNFVSAAVGMAVAIALVRGFARKRTGELGNFWVDLVRGTIRILLPISVIAAILLITGGAIQNFHNYDQVVNTLAGAQQTIPGGPVASQEAIKDLGTNGGGFYNVNSAHPFENPTTWTNWIEIFLLLVIAFSLPRTFGRMVGNKKQGYAIVGVQAVLAVISWSATLFFQLQAHGTVPTAVGAAMEGVEQRFGVANSAVFAASTTLTSTGSVDSFHDSYTSLGGLVLLFNMQLGEVAPGGVGAGLYGILILAVITVFVAGLMVGRTPEYLGKKITPREIKLAATYFLVTPLIVLTGTAVAMAMPGQRAGMLNTGPHGLSEVLYAFTSAANNNGSAFAGITVNTEWYNTALGLAMVFGRFLPIILALALAGSLAQQGKTPPSIGTLPTHRPQFVGMVAGVTLILVALTFLPMLALGPLAEGIH</sequence>
<protein>
    <recommendedName>
        <fullName evidence="1">Potassium-transporting ATPase potassium-binding subunit</fullName>
    </recommendedName>
    <alternativeName>
        <fullName evidence="1">ATP phosphohydrolase [potassium-transporting] A chain</fullName>
    </alternativeName>
    <alternativeName>
        <fullName evidence="1">Potassium-binding and translocating subunit A</fullName>
    </alternativeName>
    <alternativeName>
        <fullName evidence="1">Potassium-translocating ATPase A chain</fullName>
    </alternativeName>
</protein>
<evidence type="ECO:0000255" key="1">
    <source>
        <dbReference type="HAMAP-Rule" id="MF_00275"/>
    </source>
</evidence>
<proteinExistence type="inferred from homology"/>
<dbReference type="EMBL" id="CP000511">
    <property type="protein sequence ID" value="ABM15532.1"/>
    <property type="molecule type" value="Genomic_DNA"/>
</dbReference>
<dbReference type="RefSeq" id="WP_011781906.1">
    <property type="nucleotide sequence ID" value="NC_008726.1"/>
</dbReference>
<dbReference type="SMR" id="A1TED2"/>
<dbReference type="STRING" id="350058.Mvan_4759"/>
<dbReference type="KEGG" id="mva:Mvan_4759"/>
<dbReference type="eggNOG" id="COG2060">
    <property type="taxonomic scope" value="Bacteria"/>
</dbReference>
<dbReference type="HOGENOM" id="CLU_018614_3_0_11"/>
<dbReference type="Proteomes" id="UP000009159">
    <property type="component" value="Chromosome"/>
</dbReference>
<dbReference type="GO" id="GO:0005886">
    <property type="term" value="C:plasma membrane"/>
    <property type="evidence" value="ECO:0007669"/>
    <property type="project" value="UniProtKB-SubCell"/>
</dbReference>
<dbReference type="GO" id="GO:0008556">
    <property type="term" value="F:P-type potassium transmembrane transporter activity"/>
    <property type="evidence" value="ECO:0007669"/>
    <property type="project" value="InterPro"/>
</dbReference>
<dbReference type="GO" id="GO:0030955">
    <property type="term" value="F:potassium ion binding"/>
    <property type="evidence" value="ECO:0007669"/>
    <property type="project" value="UniProtKB-UniRule"/>
</dbReference>
<dbReference type="HAMAP" id="MF_00275">
    <property type="entry name" value="KdpA"/>
    <property type="match status" value="1"/>
</dbReference>
<dbReference type="InterPro" id="IPR004623">
    <property type="entry name" value="KdpA"/>
</dbReference>
<dbReference type="NCBIfam" id="TIGR00680">
    <property type="entry name" value="kdpA"/>
    <property type="match status" value="1"/>
</dbReference>
<dbReference type="PANTHER" id="PTHR30607">
    <property type="entry name" value="POTASSIUM-TRANSPORTING ATPASE A CHAIN"/>
    <property type="match status" value="1"/>
</dbReference>
<dbReference type="PANTHER" id="PTHR30607:SF2">
    <property type="entry name" value="POTASSIUM-TRANSPORTING ATPASE POTASSIUM-BINDING SUBUNIT"/>
    <property type="match status" value="1"/>
</dbReference>
<dbReference type="Pfam" id="PF03814">
    <property type="entry name" value="KdpA"/>
    <property type="match status" value="1"/>
</dbReference>
<dbReference type="PIRSF" id="PIRSF001294">
    <property type="entry name" value="K_ATPaseA"/>
    <property type="match status" value="1"/>
</dbReference>
<gene>
    <name evidence="1" type="primary">kdpA</name>
    <name type="ordered locus">Mvan_4759</name>
</gene>
<reference key="1">
    <citation type="submission" date="2006-12" db="EMBL/GenBank/DDBJ databases">
        <title>Complete sequence of Mycobacterium vanbaalenii PYR-1.</title>
        <authorList>
            <consortium name="US DOE Joint Genome Institute"/>
            <person name="Copeland A."/>
            <person name="Lucas S."/>
            <person name="Lapidus A."/>
            <person name="Barry K."/>
            <person name="Detter J.C."/>
            <person name="Glavina del Rio T."/>
            <person name="Hammon N."/>
            <person name="Israni S."/>
            <person name="Dalin E."/>
            <person name="Tice H."/>
            <person name="Pitluck S."/>
            <person name="Singan V."/>
            <person name="Schmutz J."/>
            <person name="Larimer F."/>
            <person name="Land M."/>
            <person name="Hauser L."/>
            <person name="Kyrpides N."/>
            <person name="Anderson I.J."/>
            <person name="Miller C."/>
            <person name="Richardson P."/>
        </authorList>
    </citation>
    <scope>NUCLEOTIDE SEQUENCE [LARGE SCALE GENOMIC DNA]</scope>
    <source>
        <strain>DSM 7251 / JCM 13017 / BCRC 16820 / KCTC 9966 / NRRL B-24157 / PYR-1</strain>
    </source>
</reference>